<feature type="chain" id="PRO_0000268471" description="Bifunctional protein FolD 2">
    <location>
        <begin position="1"/>
        <end position="286"/>
    </location>
</feature>
<feature type="binding site" evidence="1">
    <location>
        <begin position="165"/>
        <end position="167"/>
    </location>
    <ligand>
        <name>NADP(+)</name>
        <dbReference type="ChEBI" id="CHEBI:58349"/>
    </ligand>
</feature>
<feature type="binding site" evidence="1">
    <location>
        <position position="192"/>
    </location>
    <ligand>
        <name>NADP(+)</name>
        <dbReference type="ChEBI" id="CHEBI:58349"/>
    </ligand>
</feature>
<feature type="binding site" evidence="1">
    <location>
        <position position="233"/>
    </location>
    <ligand>
        <name>NADP(+)</name>
        <dbReference type="ChEBI" id="CHEBI:58349"/>
    </ligand>
</feature>
<reference key="1">
    <citation type="journal article" date="2006" name="Proc. Natl. Acad. Sci. U.S.A.">
        <title>The complete genome of Rhodococcus sp. RHA1 provides insights into a catabolic powerhouse.</title>
        <authorList>
            <person name="McLeod M.P."/>
            <person name="Warren R.L."/>
            <person name="Hsiao W.W.L."/>
            <person name="Araki N."/>
            <person name="Myhre M."/>
            <person name="Fernandes C."/>
            <person name="Miyazawa D."/>
            <person name="Wong W."/>
            <person name="Lillquist A.L."/>
            <person name="Wang D."/>
            <person name="Dosanjh M."/>
            <person name="Hara H."/>
            <person name="Petrescu A."/>
            <person name="Morin R.D."/>
            <person name="Yang G."/>
            <person name="Stott J.M."/>
            <person name="Schein J.E."/>
            <person name="Shin H."/>
            <person name="Smailus D."/>
            <person name="Siddiqui A.S."/>
            <person name="Marra M.A."/>
            <person name="Jones S.J.M."/>
            <person name="Holt R."/>
            <person name="Brinkman F.S.L."/>
            <person name="Miyauchi K."/>
            <person name="Fukuda M."/>
            <person name="Davies J.E."/>
            <person name="Mohn W.W."/>
            <person name="Eltis L.D."/>
        </authorList>
    </citation>
    <scope>NUCLEOTIDE SEQUENCE [LARGE SCALE GENOMIC DNA]</scope>
    <source>
        <strain>RHA1</strain>
    </source>
</reference>
<protein>
    <recommendedName>
        <fullName evidence="1">Bifunctional protein FolD 2</fullName>
    </recommendedName>
    <domain>
        <recommendedName>
            <fullName evidence="1">Methylenetetrahydrofolate dehydrogenase</fullName>
            <ecNumber evidence="1">1.5.1.5</ecNumber>
        </recommendedName>
    </domain>
    <domain>
        <recommendedName>
            <fullName evidence="1">Methenyltetrahydrofolate cyclohydrolase</fullName>
            <ecNumber evidence="1">3.5.4.9</ecNumber>
        </recommendedName>
    </domain>
</protein>
<sequence length="286" mass="30097">MTATILDGKATRDEIFEDLKVRVSALKDRGITPGLGTVLVGDDPGSAAYVRGKHNDCAKVGITSIRRDLPGDITQEKLDATIDELNANPDCTGYIVQLPLPKQLDENAALERIDPDKDADGLHPVNLGRLVLGKKAPLPCTPRGILHLLRRYEVPIEGAHVVVVGRGVTVGRPIGLLFTRRSENATVTLCHTRTRDLGAEVRRADIVIAAAGVPGLITADMVKPGAAVLDVGVSRTADGLRGDVAADVAEVAGFLSPNPGGVGPLTRAFLLTNVVERAERVAASLG</sequence>
<comment type="function">
    <text evidence="1">Catalyzes the oxidation of 5,10-methylenetetrahydrofolate to 5,10-methenyltetrahydrofolate and then the hydrolysis of 5,10-methenyltetrahydrofolate to 10-formyltetrahydrofolate.</text>
</comment>
<comment type="catalytic activity">
    <reaction evidence="1">
        <text>(6R)-5,10-methylene-5,6,7,8-tetrahydrofolate + NADP(+) = (6R)-5,10-methenyltetrahydrofolate + NADPH</text>
        <dbReference type="Rhea" id="RHEA:22812"/>
        <dbReference type="ChEBI" id="CHEBI:15636"/>
        <dbReference type="ChEBI" id="CHEBI:57455"/>
        <dbReference type="ChEBI" id="CHEBI:57783"/>
        <dbReference type="ChEBI" id="CHEBI:58349"/>
        <dbReference type="EC" id="1.5.1.5"/>
    </reaction>
</comment>
<comment type="catalytic activity">
    <reaction evidence="1">
        <text>(6R)-5,10-methenyltetrahydrofolate + H2O = (6R)-10-formyltetrahydrofolate + H(+)</text>
        <dbReference type="Rhea" id="RHEA:23700"/>
        <dbReference type="ChEBI" id="CHEBI:15377"/>
        <dbReference type="ChEBI" id="CHEBI:15378"/>
        <dbReference type="ChEBI" id="CHEBI:57455"/>
        <dbReference type="ChEBI" id="CHEBI:195366"/>
        <dbReference type="EC" id="3.5.4.9"/>
    </reaction>
</comment>
<comment type="pathway">
    <text evidence="1">One-carbon metabolism; tetrahydrofolate interconversion.</text>
</comment>
<comment type="subunit">
    <text evidence="1">Homodimer.</text>
</comment>
<comment type="similarity">
    <text evidence="1">Belongs to the tetrahydrofolate dehydrogenase/cyclohydrolase family.</text>
</comment>
<dbReference type="EC" id="1.5.1.5" evidence="1"/>
<dbReference type="EC" id="3.5.4.9" evidence="1"/>
<dbReference type="EMBL" id="CP000431">
    <property type="protein sequence ID" value="ABG98011.1"/>
    <property type="molecule type" value="Genomic_DNA"/>
</dbReference>
<dbReference type="RefSeq" id="WP_011598203.1">
    <property type="nucleotide sequence ID" value="NC_008268.1"/>
</dbReference>
<dbReference type="SMR" id="Q0S375"/>
<dbReference type="KEGG" id="rha:RHA1_ro06234"/>
<dbReference type="eggNOG" id="COG0190">
    <property type="taxonomic scope" value="Bacteria"/>
</dbReference>
<dbReference type="HOGENOM" id="CLU_034045_3_0_11"/>
<dbReference type="UniPathway" id="UPA00193"/>
<dbReference type="Proteomes" id="UP000008710">
    <property type="component" value="Chromosome"/>
</dbReference>
<dbReference type="GO" id="GO:0005829">
    <property type="term" value="C:cytosol"/>
    <property type="evidence" value="ECO:0007669"/>
    <property type="project" value="TreeGrafter"/>
</dbReference>
<dbReference type="GO" id="GO:0004477">
    <property type="term" value="F:methenyltetrahydrofolate cyclohydrolase activity"/>
    <property type="evidence" value="ECO:0007669"/>
    <property type="project" value="UniProtKB-UniRule"/>
</dbReference>
<dbReference type="GO" id="GO:0004488">
    <property type="term" value="F:methylenetetrahydrofolate dehydrogenase (NADP+) activity"/>
    <property type="evidence" value="ECO:0007669"/>
    <property type="project" value="UniProtKB-UniRule"/>
</dbReference>
<dbReference type="GO" id="GO:0000105">
    <property type="term" value="P:L-histidine biosynthetic process"/>
    <property type="evidence" value="ECO:0007669"/>
    <property type="project" value="UniProtKB-KW"/>
</dbReference>
<dbReference type="GO" id="GO:0009086">
    <property type="term" value="P:methionine biosynthetic process"/>
    <property type="evidence" value="ECO:0007669"/>
    <property type="project" value="UniProtKB-KW"/>
</dbReference>
<dbReference type="GO" id="GO:0006164">
    <property type="term" value="P:purine nucleotide biosynthetic process"/>
    <property type="evidence" value="ECO:0007669"/>
    <property type="project" value="UniProtKB-KW"/>
</dbReference>
<dbReference type="GO" id="GO:0035999">
    <property type="term" value="P:tetrahydrofolate interconversion"/>
    <property type="evidence" value="ECO:0007669"/>
    <property type="project" value="UniProtKB-UniRule"/>
</dbReference>
<dbReference type="CDD" id="cd01080">
    <property type="entry name" value="NAD_bind_m-THF_DH_Cyclohyd"/>
    <property type="match status" value="1"/>
</dbReference>
<dbReference type="FunFam" id="3.40.50.720:FF:000094">
    <property type="entry name" value="Bifunctional protein FolD"/>
    <property type="match status" value="1"/>
</dbReference>
<dbReference type="FunFam" id="3.40.50.10860:FF:000005">
    <property type="entry name" value="C-1-tetrahydrofolate synthase, cytoplasmic, putative"/>
    <property type="match status" value="1"/>
</dbReference>
<dbReference type="Gene3D" id="3.40.50.10860">
    <property type="entry name" value="Leucine Dehydrogenase, chain A, domain 1"/>
    <property type="match status" value="1"/>
</dbReference>
<dbReference type="Gene3D" id="3.40.50.720">
    <property type="entry name" value="NAD(P)-binding Rossmann-like Domain"/>
    <property type="match status" value="1"/>
</dbReference>
<dbReference type="HAMAP" id="MF_01576">
    <property type="entry name" value="THF_DHG_CYH"/>
    <property type="match status" value="1"/>
</dbReference>
<dbReference type="InterPro" id="IPR046346">
    <property type="entry name" value="Aminoacid_DH-like_N_sf"/>
</dbReference>
<dbReference type="InterPro" id="IPR036291">
    <property type="entry name" value="NAD(P)-bd_dom_sf"/>
</dbReference>
<dbReference type="InterPro" id="IPR000672">
    <property type="entry name" value="THF_DH/CycHdrlase"/>
</dbReference>
<dbReference type="InterPro" id="IPR020630">
    <property type="entry name" value="THF_DH/CycHdrlase_cat_dom"/>
</dbReference>
<dbReference type="InterPro" id="IPR020631">
    <property type="entry name" value="THF_DH/CycHdrlase_NAD-bd_dom"/>
</dbReference>
<dbReference type="NCBIfam" id="NF010789">
    <property type="entry name" value="PRK14193.1"/>
    <property type="match status" value="1"/>
</dbReference>
<dbReference type="PANTHER" id="PTHR48099:SF5">
    <property type="entry name" value="C-1-TETRAHYDROFOLATE SYNTHASE, CYTOPLASMIC"/>
    <property type="match status" value="1"/>
</dbReference>
<dbReference type="PANTHER" id="PTHR48099">
    <property type="entry name" value="C-1-TETRAHYDROFOLATE SYNTHASE, CYTOPLASMIC-RELATED"/>
    <property type="match status" value="1"/>
</dbReference>
<dbReference type="Pfam" id="PF00763">
    <property type="entry name" value="THF_DHG_CYH"/>
    <property type="match status" value="1"/>
</dbReference>
<dbReference type="Pfam" id="PF02882">
    <property type="entry name" value="THF_DHG_CYH_C"/>
    <property type="match status" value="1"/>
</dbReference>
<dbReference type="PRINTS" id="PR00085">
    <property type="entry name" value="THFDHDRGNASE"/>
</dbReference>
<dbReference type="SUPFAM" id="SSF53223">
    <property type="entry name" value="Aminoacid dehydrogenase-like, N-terminal domain"/>
    <property type="match status" value="1"/>
</dbReference>
<dbReference type="SUPFAM" id="SSF51735">
    <property type="entry name" value="NAD(P)-binding Rossmann-fold domains"/>
    <property type="match status" value="1"/>
</dbReference>
<gene>
    <name evidence="1" type="primary">folD2</name>
    <name type="ordered locus">RHA1_ro06234</name>
</gene>
<keyword id="KW-0028">Amino-acid biosynthesis</keyword>
<keyword id="KW-0368">Histidine biosynthesis</keyword>
<keyword id="KW-0378">Hydrolase</keyword>
<keyword id="KW-0486">Methionine biosynthesis</keyword>
<keyword id="KW-0511">Multifunctional enzyme</keyword>
<keyword id="KW-0521">NADP</keyword>
<keyword id="KW-0554">One-carbon metabolism</keyword>
<keyword id="KW-0560">Oxidoreductase</keyword>
<keyword id="KW-0658">Purine biosynthesis</keyword>
<name>FOLD2_RHOJR</name>
<evidence type="ECO:0000255" key="1">
    <source>
        <dbReference type="HAMAP-Rule" id="MF_01576"/>
    </source>
</evidence>
<organism>
    <name type="scientific">Rhodococcus jostii (strain RHA1)</name>
    <dbReference type="NCBI Taxonomy" id="101510"/>
    <lineage>
        <taxon>Bacteria</taxon>
        <taxon>Bacillati</taxon>
        <taxon>Actinomycetota</taxon>
        <taxon>Actinomycetes</taxon>
        <taxon>Mycobacteriales</taxon>
        <taxon>Nocardiaceae</taxon>
        <taxon>Rhodococcus</taxon>
    </lineage>
</organism>
<proteinExistence type="inferred from homology"/>
<accession>Q0S375</accession>